<proteinExistence type="inferred from homology"/>
<sequence length="347" mass="38826">MRHGDISSSKDCVGVAVVNYKMPRLHTRAEVLDNARKIADMIVGMKQGLPGMDLVIFPEYSTHGIMYDAKEMYDTASTIPGDETEIFADACRRAKTWGVFSLTGEQHEDHPNKAPYNTLILMNDKGEIVQKYRKIMPWCPVEGWYPGDCTYVSEGPKGLKISLIICDDGNYPEIWRDCTMRGAELVVRCQGYMYPSKDQQVIVSKAMAWMNNTYVAVANATGFDGVYSYFGHSAIIGFDGRTLGECGEEDYGIQYAELSVSQIRDFRKNAQSQNHLFKLLHRGYTGKINSGEGDQGVAECPYEFYRTWITSPDAAKEQVEAITRKTVGTAECPIEGIPNEETPSGHR</sequence>
<reference key="1">
    <citation type="journal article" date="2011" name="Stand. Genomic Sci.">
        <title>Complete genome sequence of 'Thioalkalivibrio sulfidophilus' HL-EbGr7.</title>
        <authorList>
            <person name="Muyzer G."/>
            <person name="Sorokin D.Y."/>
            <person name="Mavromatis K."/>
            <person name="Lapidus A."/>
            <person name="Clum A."/>
            <person name="Ivanova N."/>
            <person name="Pati A."/>
            <person name="d'Haeseleer P."/>
            <person name="Woyke T."/>
            <person name="Kyrpides N.C."/>
        </authorList>
    </citation>
    <scope>NUCLEOTIDE SEQUENCE [LARGE SCALE GENOMIC DNA]</scope>
    <source>
        <strain>HL-EbGR7</strain>
    </source>
</reference>
<protein>
    <recommendedName>
        <fullName evidence="1">Aliphatic amidase</fullName>
        <ecNumber evidence="1">3.5.1.4</ecNumber>
    </recommendedName>
    <alternativeName>
        <fullName evidence="1">Acylamide amidohydrolase</fullName>
    </alternativeName>
</protein>
<dbReference type="EC" id="3.5.1.4" evidence="1"/>
<dbReference type="EMBL" id="CP001339">
    <property type="protein sequence ID" value="ACL74186.1"/>
    <property type="molecule type" value="Genomic_DNA"/>
</dbReference>
<dbReference type="RefSeq" id="WP_012639648.1">
    <property type="nucleotide sequence ID" value="NC_011901.1"/>
</dbReference>
<dbReference type="SMR" id="B8GQ39"/>
<dbReference type="STRING" id="396588.Tgr7_3117"/>
<dbReference type="KEGG" id="tgr:Tgr7_3117"/>
<dbReference type="eggNOG" id="COG0388">
    <property type="taxonomic scope" value="Bacteria"/>
</dbReference>
<dbReference type="HOGENOM" id="CLU_071797_0_0_6"/>
<dbReference type="OrthoDB" id="9811121at2"/>
<dbReference type="Proteomes" id="UP000002383">
    <property type="component" value="Chromosome"/>
</dbReference>
<dbReference type="GO" id="GO:0004040">
    <property type="term" value="F:amidase activity"/>
    <property type="evidence" value="ECO:0007669"/>
    <property type="project" value="UniProtKB-UniRule"/>
</dbReference>
<dbReference type="CDD" id="cd07565">
    <property type="entry name" value="aliphatic_amidase"/>
    <property type="match status" value="1"/>
</dbReference>
<dbReference type="Gene3D" id="3.60.110.10">
    <property type="entry name" value="Carbon-nitrogen hydrolase"/>
    <property type="match status" value="1"/>
</dbReference>
<dbReference type="HAMAP" id="MF_01242">
    <property type="entry name" value="Aliphatic_amidase"/>
    <property type="match status" value="1"/>
</dbReference>
<dbReference type="InterPro" id="IPR050345">
    <property type="entry name" value="Aliph_Amidase/BUP"/>
</dbReference>
<dbReference type="InterPro" id="IPR023719">
    <property type="entry name" value="Aliphatic_amidase"/>
</dbReference>
<dbReference type="InterPro" id="IPR003010">
    <property type="entry name" value="C-N_Hydrolase"/>
</dbReference>
<dbReference type="InterPro" id="IPR036526">
    <property type="entry name" value="C-N_Hydrolase_sf"/>
</dbReference>
<dbReference type="NCBIfam" id="NF009802">
    <property type="entry name" value="PRK13286.1"/>
    <property type="match status" value="1"/>
</dbReference>
<dbReference type="PANTHER" id="PTHR43674:SF14">
    <property type="entry name" value="ALIPHATIC AMIDASE"/>
    <property type="match status" value="1"/>
</dbReference>
<dbReference type="PANTHER" id="PTHR43674">
    <property type="entry name" value="NITRILASE C965.09-RELATED"/>
    <property type="match status" value="1"/>
</dbReference>
<dbReference type="Pfam" id="PF00795">
    <property type="entry name" value="CN_hydrolase"/>
    <property type="match status" value="1"/>
</dbReference>
<dbReference type="SUPFAM" id="SSF56317">
    <property type="entry name" value="Carbon-nitrogen hydrolase"/>
    <property type="match status" value="1"/>
</dbReference>
<dbReference type="PROSITE" id="PS50263">
    <property type="entry name" value="CN_HYDROLASE"/>
    <property type="match status" value="1"/>
</dbReference>
<comment type="function">
    <text evidence="1">Catalyzes the hydrolysis of short-chain aliphatic amides to their corresponding organic acids with release of ammonia.</text>
</comment>
<comment type="function">
    <text evidence="1">Also exhibits in vitro acyl transferase activity, transferring the acyl moiety of short-chain amides to hydroxylamine to form hydroxamates.</text>
</comment>
<comment type="catalytic activity">
    <reaction evidence="1">
        <text>a monocarboxylic acid amide + H2O = a monocarboxylate + NH4(+)</text>
        <dbReference type="Rhea" id="RHEA:12020"/>
        <dbReference type="ChEBI" id="CHEBI:15377"/>
        <dbReference type="ChEBI" id="CHEBI:28938"/>
        <dbReference type="ChEBI" id="CHEBI:35757"/>
        <dbReference type="ChEBI" id="CHEBI:83628"/>
        <dbReference type="EC" id="3.5.1.4"/>
    </reaction>
</comment>
<comment type="similarity">
    <text evidence="1">Belongs to the carbon-nitrogen hydrolase superfamily. Aliphatic amidase family.</text>
</comment>
<organism>
    <name type="scientific">Thioalkalivibrio sulfidiphilus (strain HL-EbGR7)</name>
    <dbReference type="NCBI Taxonomy" id="396588"/>
    <lineage>
        <taxon>Bacteria</taxon>
        <taxon>Pseudomonadati</taxon>
        <taxon>Pseudomonadota</taxon>
        <taxon>Gammaproteobacteria</taxon>
        <taxon>Chromatiales</taxon>
        <taxon>Ectothiorhodospiraceae</taxon>
        <taxon>Thioalkalivibrio</taxon>
    </lineage>
</organism>
<name>AMIE_THISH</name>
<accession>B8GQ39</accession>
<keyword id="KW-0378">Hydrolase</keyword>
<keyword id="KW-1185">Reference proteome</keyword>
<gene>
    <name evidence="1" type="primary">amiE</name>
    <name type="ordered locus">Tgr7_3117</name>
</gene>
<feature type="chain" id="PRO_1000165034" description="Aliphatic amidase">
    <location>
        <begin position="1"/>
        <end position="347"/>
    </location>
</feature>
<feature type="domain" description="CN hydrolase" evidence="2">
    <location>
        <begin position="13"/>
        <end position="260"/>
    </location>
</feature>
<feature type="active site" description="Proton acceptor" evidence="1">
    <location>
        <position position="59"/>
    </location>
</feature>
<feature type="active site" description="Proton donor" evidence="1">
    <location>
        <position position="134"/>
    </location>
</feature>
<feature type="active site" description="Nucleophile" evidence="1">
    <location>
        <position position="166"/>
    </location>
</feature>
<evidence type="ECO:0000255" key="1">
    <source>
        <dbReference type="HAMAP-Rule" id="MF_01242"/>
    </source>
</evidence>
<evidence type="ECO:0000255" key="2">
    <source>
        <dbReference type="PROSITE-ProRule" id="PRU00054"/>
    </source>
</evidence>